<gene>
    <name type="ordered locus">Spro_4740</name>
</gene>
<evidence type="ECO:0000255" key="1">
    <source>
        <dbReference type="HAMAP-Rule" id="MF_00677"/>
    </source>
</evidence>
<protein>
    <recommendedName>
        <fullName evidence="1">UPF0261 protein Spro_4740</fullName>
    </recommendedName>
</protein>
<sequence length="409" mass="43858">MFNTSTFVYIATTADTKGQELEYVRQIIANLGLPTVTVDLSTSSLPANPAADICAEEVAGYHPEGARAVFCPNRSHAITAMALAFERFLLTRHDIAALLGLGGSGGTAIITPAMQKLPIGLPKLMVSSMAAGDVSVYVGNSDIAMLYSVTDIAGLNRISRRVLSNAACQIAGAVRFATAHDIEEKPAVGLTMFGVTTPCIKMVVSALEPQWDCLVFHATGSGGRALEKLIDSRLLSAALDLTTTEVADYLFGGVLPCNEERFSAIARTGIPCILSCGALDMINFGPPETVPARYAERLIHQHNPQVTLVRTTPQENASIGRWIGEKMNACSGEVRFVIPGGGVSALDAPGQPFWDPQALAAFMQALESTLRPTNKRRLIKTAYHINDPRFAHIVTEQFQHIANPRLLSK</sequence>
<name>Y4740_SERP5</name>
<feature type="chain" id="PRO_1000061964" description="UPF0261 protein Spro_4740">
    <location>
        <begin position="1"/>
        <end position="409"/>
    </location>
</feature>
<organism>
    <name type="scientific">Serratia proteamaculans (strain 568)</name>
    <dbReference type="NCBI Taxonomy" id="399741"/>
    <lineage>
        <taxon>Bacteria</taxon>
        <taxon>Pseudomonadati</taxon>
        <taxon>Pseudomonadota</taxon>
        <taxon>Gammaproteobacteria</taxon>
        <taxon>Enterobacterales</taxon>
        <taxon>Yersiniaceae</taxon>
        <taxon>Serratia</taxon>
    </lineage>
</organism>
<comment type="similarity">
    <text evidence="1">Belongs to the UPF0261 family.</text>
</comment>
<reference key="1">
    <citation type="submission" date="2007-09" db="EMBL/GenBank/DDBJ databases">
        <title>Complete sequence of chromosome of Serratia proteamaculans 568.</title>
        <authorList>
            <consortium name="US DOE Joint Genome Institute"/>
            <person name="Copeland A."/>
            <person name="Lucas S."/>
            <person name="Lapidus A."/>
            <person name="Barry K."/>
            <person name="Glavina del Rio T."/>
            <person name="Dalin E."/>
            <person name="Tice H."/>
            <person name="Pitluck S."/>
            <person name="Chain P."/>
            <person name="Malfatti S."/>
            <person name="Shin M."/>
            <person name="Vergez L."/>
            <person name="Schmutz J."/>
            <person name="Larimer F."/>
            <person name="Land M."/>
            <person name="Hauser L."/>
            <person name="Kyrpides N."/>
            <person name="Kim E."/>
            <person name="Taghavi S."/>
            <person name="Newman L."/>
            <person name="Vangronsveld J."/>
            <person name="van der Lelie D."/>
            <person name="Richardson P."/>
        </authorList>
    </citation>
    <scope>NUCLEOTIDE SEQUENCE [LARGE SCALE GENOMIC DNA]</scope>
    <source>
        <strain>568</strain>
    </source>
</reference>
<accession>A8GL43</accession>
<proteinExistence type="inferred from homology"/>
<dbReference type="EMBL" id="CP000826">
    <property type="protein sequence ID" value="ABV43833.1"/>
    <property type="molecule type" value="Genomic_DNA"/>
</dbReference>
<dbReference type="SMR" id="A8GL43"/>
<dbReference type="STRING" id="399741.Spro_4740"/>
<dbReference type="KEGG" id="spe:Spro_4740"/>
<dbReference type="eggNOG" id="COG5441">
    <property type="taxonomic scope" value="Bacteria"/>
</dbReference>
<dbReference type="HOGENOM" id="CLU_036813_1_0_6"/>
<dbReference type="OrthoDB" id="9776369at2"/>
<dbReference type="CDD" id="cd15488">
    <property type="entry name" value="Tm-1-like"/>
    <property type="match status" value="1"/>
</dbReference>
<dbReference type="Gene3D" id="3.40.50.12030">
    <property type="entry name" value="Uncharacterised protein family UPF0261, NC domain"/>
    <property type="match status" value="1"/>
</dbReference>
<dbReference type="Gene3D" id="3.40.50.12020">
    <property type="entry name" value="Uncharacterised protein family UPF0261, NN domain"/>
    <property type="match status" value="1"/>
</dbReference>
<dbReference type="HAMAP" id="MF_00677">
    <property type="entry name" value="UPF0261"/>
    <property type="match status" value="1"/>
</dbReference>
<dbReference type="InterPro" id="IPR051353">
    <property type="entry name" value="Tobamovirus_resist_UPF0261"/>
</dbReference>
<dbReference type="InterPro" id="IPR008322">
    <property type="entry name" value="UPF0261"/>
</dbReference>
<dbReference type="InterPro" id="IPR056778">
    <property type="entry name" value="UPF0261_C"/>
</dbReference>
<dbReference type="InterPro" id="IPR044122">
    <property type="entry name" value="UPF0261_N"/>
</dbReference>
<dbReference type="NCBIfam" id="NF002673">
    <property type="entry name" value="PRK02399.1-1"/>
    <property type="match status" value="1"/>
</dbReference>
<dbReference type="NCBIfam" id="NF002674">
    <property type="entry name" value="PRK02399.1-2"/>
    <property type="match status" value="1"/>
</dbReference>
<dbReference type="PANTHER" id="PTHR31862">
    <property type="entry name" value="UPF0261 DOMAIN PROTEIN (AFU_ORTHOLOGUE AFUA_1G10120)"/>
    <property type="match status" value="1"/>
</dbReference>
<dbReference type="PANTHER" id="PTHR31862:SF1">
    <property type="entry name" value="UPF0261 DOMAIN PROTEIN (AFU_ORTHOLOGUE AFUA_1G10120)"/>
    <property type="match status" value="1"/>
</dbReference>
<dbReference type="Pfam" id="PF06792">
    <property type="entry name" value="UPF0261"/>
    <property type="match status" value="1"/>
</dbReference>
<dbReference type="Pfam" id="PF23189">
    <property type="entry name" value="UPF0261_C"/>
    <property type="match status" value="1"/>
</dbReference>
<dbReference type="PIRSF" id="PIRSF033271">
    <property type="entry name" value="UCP033271"/>
    <property type="match status" value="1"/>
</dbReference>